<gene>
    <name evidence="1" type="primary">trhO</name>
    <name type="ordered locus">VSAL_II0216</name>
</gene>
<feature type="chain" id="PRO_1000200335" description="tRNA uridine(34) hydroxylase">
    <location>
        <begin position="1"/>
        <end position="326"/>
    </location>
</feature>
<feature type="domain" description="Rhodanese" evidence="1">
    <location>
        <begin position="123"/>
        <end position="217"/>
    </location>
</feature>
<feature type="region of interest" description="Disordered" evidence="2">
    <location>
        <begin position="276"/>
        <end position="326"/>
    </location>
</feature>
<feature type="compositionally biased region" description="Basic and acidic residues" evidence="2">
    <location>
        <begin position="276"/>
        <end position="320"/>
    </location>
</feature>
<feature type="active site" description="Cysteine persulfide intermediate" evidence="1">
    <location>
        <position position="177"/>
    </location>
</feature>
<proteinExistence type="inferred from homology"/>
<protein>
    <recommendedName>
        <fullName evidence="1">tRNA uridine(34) hydroxylase</fullName>
        <ecNumber evidence="1">1.14.-.-</ecNumber>
    </recommendedName>
    <alternativeName>
        <fullName evidence="1">tRNA hydroxylation protein O</fullName>
    </alternativeName>
</protein>
<comment type="function">
    <text evidence="1">Catalyzes oxygen-dependent 5-hydroxyuridine (ho5U) modification at position 34 in tRNAs.</text>
</comment>
<comment type="catalytic activity">
    <reaction evidence="1">
        <text>uridine(34) in tRNA + AH2 + O2 = 5-hydroxyuridine(34) in tRNA + A + H2O</text>
        <dbReference type="Rhea" id="RHEA:64224"/>
        <dbReference type="Rhea" id="RHEA-COMP:11727"/>
        <dbReference type="Rhea" id="RHEA-COMP:13381"/>
        <dbReference type="ChEBI" id="CHEBI:13193"/>
        <dbReference type="ChEBI" id="CHEBI:15377"/>
        <dbReference type="ChEBI" id="CHEBI:15379"/>
        <dbReference type="ChEBI" id="CHEBI:17499"/>
        <dbReference type="ChEBI" id="CHEBI:65315"/>
        <dbReference type="ChEBI" id="CHEBI:136877"/>
    </reaction>
</comment>
<comment type="similarity">
    <text evidence="1">Belongs to the TrhO family.</text>
</comment>
<evidence type="ECO:0000255" key="1">
    <source>
        <dbReference type="HAMAP-Rule" id="MF_00469"/>
    </source>
</evidence>
<evidence type="ECO:0000256" key="2">
    <source>
        <dbReference type="SAM" id="MobiDB-lite"/>
    </source>
</evidence>
<organism>
    <name type="scientific">Aliivibrio salmonicida (strain LFI1238)</name>
    <name type="common">Vibrio salmonicida (strain LFI1238)</name>
    <dbReference type="NCBI Taxonomy" id="316275"/>
    <lineage>
        <taxon>Bacteria</taxon>
        <taxon>Pseudomonadati</taxon>
        <taxon>Pseudomonadota</taxon>
        <taxon>Gammaproteobacteria</taxon>
        <taxon>Vibrionales</taxon>
        <taxon>Vibrionaceae</taxon>
        <taxon>Aliivibrio</taxon>
    </lineage>
</organism>
<dbReference type="EC" id="1.14.-.-" evidence="1"/>
<dbReference type="EMBL" id="FM178380">
    <property type="protein sequence ID" value="CAQ80970.1"/>
    <property type="molecule type" value="Genomic_DNA"/>
</dbReference>
<dbReference type="RefSeq" id="WP_012551602.1">
    <property type="nucleotide sequence ID" value="NC_011313.1"/>
</dbReference>
<dbReference type="SMR" id="B6EQJ5"/>
<dbReference type="KEGG" id="vsa:VSAL_II0216"/>
<dbReference type="eggNOG" id="COG1054">
    <property type="taxonomic scope" value="Bacteria"/>
</dbReference>
<dbReference type="HOGENOM" id="CLU_038878_0_0_6"/>
<dbReference type="Proteomes" id="UP000001730">
    <property type="component" value="Chromosome 2"/>
</dbReference>
<dbReference type="GO" id="GO:0016705">
    <property type="term" value="F:oxidoreductase activity, acting on paired donors, with incorporation or reduction of molecular oxygen"/>
    <property type="evidence" value="ECO:0007669"/>
    <property type="project" value="UniProtKB-UniRule"/>
</dbReference>
<dbReference type="GO" id="GO:0006400">
    <property type="term" value="P:tRNA modification"/>
    <property type="evidence" value="ECO:0007669"/>
    <property type="project" value="UniProtKB-UniRule"/>
</dbReference>
<dbReference type="CDD" id="cd01518">
    <property type="entry name" value="RHOD_YceA"/>
    <property type="match status" value="1"/>
</dbReference>
<dbReference type="Gene3D" id="3.30.70.100">
    <property type="match status" value="1"/>
</dbReference>
<dbReference type="Gene3D" id="3.40.250.10">
    <property type="entry name" value="Rhodanese-like domain"/>
    <property type="match status" value="1"/>
</dbReference>
<dbReference type="HAMAP" id="MF_00469">
    <property type="entry name" value="TrhO"/>
    <property type="match status" value="1"/>
</dbReference>
<dbReference type="InterPro" id="IPR001763">
    <property type="entry name" value="Rhodanese-like_dom"/>
</dbReference>
<dbReference type="InterPro" id="IPR036873">
    <property type="entry name" value="Rhodanese-like_dom_sf"/>
</dbReference>
<dbReference type="InterPro" id="IPR020936">
    <property type="entry name" value="TrhO"/>
</dbReference>
<dbReference type="InterPro" id="IPR040503">
    <property type="entry name" value="TRHO_N"/>
</dbReference>
<dbReference type="NCBIfam" id="NF001136">
    <property type="entry name" value="PRK00142.1-4"/>
    <property type="match status" value="1"/>
</dbReference>
<dbReference type="PANTHER" id="PTHR43268:SF3">
    <property type="entry name" value="RHODANESE-LIKE DOMAIN-CONTAINING PROTEIN 7-RELATED"/>
    <property type="match status" value="1"/>
</dbReference>
<dbReference type="PANTHER" id="PTHR43268">
    <property type="entry name" value="THIOSULFATE SULFURTRANSFERASE/RHODANESE-LIKE DOMAIN-CONTAINING PROTEIN 2"/>
    <property type="match status" value="1"/>
</dbReference>
<dbReference type="Pfam" id="PF00581">
    <property type="entry name" value="Rhodanese"/>
    <property type="match status" value="1"/>
</dbReference>
<dbReference type="Pfam" id="PF17773">
    <property type="entry name" value="UPF0176_N"/>
    <property type="match status" value="1"/>
</dbReference>
<dbReference type="SMART" id="SM00450">
    <property type="entry name" value="RHOD"/>
    <property type="match status" value="1"/>
</dbReference>
<dbReference type="SUPFAM" id="SSF52821">
    <property type="entry name" value="Rhodanese/Cell cycle control phosphatase"/>
    <property type="match status" value="1"/>
</dbReference>
<dbReference type="PROSITE" id="PS50206">
    <property type="entry name" value="RHODANESE_3"/>
    <property type="match status" value="1"/>
</dbReference>
<keyword id="KW-0560">Oxidoreductase</keyword>
<keyword id="KW-0819">tRNA processing</keyword>
<reference key="1">
    <citation type="journal article" date="2008" name="BMC Genomics">
        <title>The genome sequence of the fish pathogen Aliivibrio salmonicida strain LFI1238 shows extensive evidence of gene decay.</title>
        <authorList>
            <person name="Hjerde E."/>
            <person name="Lorentzen M.S."/>
            <person name="Holden M.T."/>
            <person name="Seeger K."/>
            <person name="Paulsen S."/>
            <person name="Bason N."/>
            <person name="Churcher C."/>
            <person name="Harris D."/>
            <person name="Norbertczak H."/>
            <person name="Quail M.A."/>
            <person name="Sanders S."/>
            <person name="Thurston S."/>
            <person name="Parkhill J."/>
            <person name="Willassen N.P."/>
            <person name="Thomson N.R."/>
        </authorList>
    </citation>
    <scope>NUCLEOTIDE SEQUENCE [LARGE SCALE GENOMIC DNA]</scope>
    <source>
        <strain>LFI1238</strain>
    </source>
</reference>
<sequence length="326" mass="37321">MSQYIVCALYKFVSLEDYTEIRQPLTQVMEDNQIRGTLLLASEGINGTVAGSRKAIDTLLTWFKEDSRLADVVYKESINDVQPFNRTKVKLKKEIVTMGVEGIDPLHVVGTYVKPADWNALISDPDVLLVDTRNDYEVDIGTFKYAVNPKTETFRDFPQYVAENLDPAKHKKVAMFCTGGIRCEKSTAYMKEQGFDEVYHLEGGILKYLEEVPEENSLWEGDCYVFDGRVAVNHQLEKSHYDVCNACRLPITDEDKQSDSFEKGVSCPKCIDQHTEEQKSRFREREKQVQLANERGETHVGGDAAKLIEQRKQEKKEKKQQQRSSK</sequence>
<name>TRHO_ALISL</name>
<accession>B6EQJ5</accession>